<proteinExistence type="inferred from homology"/>
<gene>
    <name evidence="1" type="primary">folD</name>
    <name type="ordered locus">YPA_2565</name>
</gene>
<accession>Q1C4U4</accession>
<organism>
    <name type="scientific">Yersinia pestis bv. Antiqua (strain Antiqua)</name>
    <dbReference type="NCBI Taxonomy" id="360102"/>
    <lineage>
        <taxon>Bacteria</taxon>
        <taxon>Pseudomonadati</taxon>
        <taxon>Pseudomonadota</taxon>
        <taxon>Gammaproteobacteria</taxon>
        <taxon>Enterobacterales</taxon>
        <taxon>Yersiniaceae</taxon>
        <taxon>Yersinia</taxon>
    </lineage>
</organism>
<evidence type="ECO:0000255" key="1">
    <source>
        <dbReference type="HAMAP-Rule" id="MF_01576"/>
    </source>
</evidence>
<keyword id="KW-0028">Amino-acid biosynthesis</keyword>
<keyword id="KW-0368">Histidine biosynthesis</keyword>
<keyword id="KW-0378">Hydrolase</keyword>
<keyword id="KW-0486">Methionine biosynthesis</keyword>
<keyword id="KW-0511">Multifunctional enzyme</keyword>
<keyword id="KW-0521">NADP</keyword>
<keyword id="KW-0554">One-carbon metabolism</keyword>
<keyword id="KW-0560">Oxidoreductase</keyword>
<keyword id="KW-0658">Purine biosynthesis</keyword>
<reference key="1">
    <citation type="journal article" date="2006" name="J. Bacteriol.">
        <title>Complete genome sequence of Yersinia pestis strains Antiqua and Nepal516: evidence of gene reduction in an emerging pathogen.</title>
        <authorList>
            <person name="Chain P.S.G."/>
            <person name="Hu P."/>
            <person name="Malfatti S.A."/>
            <person name="Radnedge L."/>
            <person name="Larimer F."/>
            <person name="Vergez L.M."/>
            <person name="Worsham P."/>
            <person name="Chu M.C."/>
            <person name="Andersen G.L."/>
        </authorList>
    </citation>
    <scope>NUCLEOTIDE SEQUENCE [LARGE SCALE GENOMIC DNA]</scope>
    <source>
        <strain>Antiqua</strain>
    </source>
</reference>
<name>FOLD_YERPA</name>
<dbReference type="EC" id="1.5.1.5" evidence="1"/>
<dbReference type="EC" id="3.5.4.9" evidence="1"/>
<dbReference type="EMBL" id="CP000308">
    <property type="protein sequence ID" value="ABG14528.1"/>
    <property type="molecule type" value="Genomic_DNA"/>
</dbReference>
<dbReference type="RefSeq" id="WP_002209774.1">
    <property type="nucleotide sequence ID" value="NZ_CP009906.1"/>
</dbReference>
<dbReference type="SMR" id="Q1C4U4"/>
<dbReference type="GeneID" id="57975784"/>
<dbReference type="KEGG" id="ypa:YPA_2565"/>
<dbReference type="UniPathway" id="UPA00193"/>
<dbReference type="Proteomes" id="UP000001971">
    <property type="component" value="Chromosome"/>
</dbReference>
<dbReference type="GO" id="GO:0005829">
    <property type="term" value="C:cytosol"/>
    <property type="evidence" value="ECO:0007669"/>
    <property type="project" value="TreeGrafter"/>
</dbReference>
<dbReference type="GO" id="GO:0004477">
    <property type="term" value="F:methenyltetrahydrofolate cyclohydrolase activity"/>
    <property type="evidence" value="ECO:0007669"/>
    <property type="project" value="UniProtKB-UniRule"/>
</dbReference>
<dbReference type="GO" id="GO:0004488">
    <property type="term" value="F:methylenetetrahydrofolate dehydrogenase (NADP+) activity"/>
    <property type="evidence" value="ECO:0007669"/>
    <property type="project" value="UniProtKB-UniRule"/>
</dbReference>
<dbReference type="GO" id="GO:0000105">
    <property type="term" value="P:L-histidine biosynthetic process"/>
    <property type="evidence" value="ECO:0007669"/>
    <property type="project" value="UniProtKB-KW"/>
</dbReference>
<dbReference type="GO" id="GO:0009086">
    <property type="term" value="P:methionine biosynthetic process"/>
    <property type="evidence" value="ECO:0007669"/>
    <property type="project" value="UniProtKB-KW"/>
</dbReference>
<dbReference type="GO" id="GO:0006164">
    <property type="term" value="P:purine nucleotide biosynthetic process"/>
    <property type="evidence" value="ECO:0007669"/>
    <property type="project" value="UniProtKB-KW"/>
</dbReference>
<dbReference type="GO" id="GO:0035999">
    <property type="term" value="P:tetrahydrofolate interconversion"/>
    <property type="evidence" value="ECO:0007669"/>
    <property type="project" value="UniProtKB-UniRule"/>
</dbReference>
<dbReference type="CDD" id="cd01080">
    <property type="entry name" value="NAD_bind_m-THF_DH_Cyclohyd"/>
    <property type="match status" value="1"/>
</dbReference>
<dbReference type="FunFam" id="3.40.50.10860:FF:000001">
    <property type="entry name" value="Bifunctional protein FolD"/>
    <property type="match status" value="1"/>
</dbReference>
<dbReference type="FunFam" id="3.40.50.720:FF:000006">
    <property type="entry name" value="Bifunctional protein FolD"/>
    <property type="match status" value="1"/>
</dbReference>
<dbReference type="Gene3D" id="3.40.50.10860">
    <property type="entry name" value="Leucine Dehydrogenase, chain A, domain 1"/>
    <property type="match status" value="1"/>
</dbReference>
<dbReference type="Gene3D" id="3.40.50.720">
    <property type="entry name" value="NAD(P)-binding Rossmann-like Domain"/>
    <property type="match status" value="1"/>
</dbReference>
<dbReference type="HAMAP" id="MF_01576">
    <property type="entry name" value="THF_DHG_CYH"/>
    <property type="match status" value="1"/>
</dbReference>
<dbReference type="InterPro" id="IPR046346">
    <property type="entry name" value="Aminoacid_DH-like_N_sf"/>
</dbReference>
<dbReference type="InterPro" id="IPR036291">
    <property type="entry name" value="NAD(P)-bd_dom_sf"/>
</dbReference>
<dbReference type="InterPro" id="IPR000672">
    <property type="entry name" value="THF_DH/CycHdrlase"/>
</dbReference>
<dbReference type="InterPro" id="IPR020630">
    <property type="entry name" value="THF_DH/CycHdrlase_cat_dom"/>
</dbReference>
<dbReference type="InterPro" id="IPR020867">
    <property type="entry name" value="THF_DH/CycHdrlase_CS"/>
</dbReference>
<dbReference type="InterPro" id="IPR020631">
    <property type="entry name" value="THF_DH/CycHdrlase_NAD-bd_dom"/>
</dbReference>
<dbReference type="NCBIfam" id="NF008058">
    <property type="entry name" value="PRK10792.1"/>
    <property type="match status" value="1"/>
</dbReference>
<dbReference type="NCBIfam" id="NF010783">
    <property type="entry name" value="PRK14186.1"/>
    <property type="match status" value="1"/>
</dbReference>
<dbReference type="PANTHER" id="PTHR48099:SF5">
    <property type="entry name" value="C-1-TETRAHYDROFOLATE SYNTHASE, CYTOPLASMIC"/>
    <property type="match status" value="1"/>
</dbReference>
<dbReference type="PANTHER" id="PTHR48099">
    <property type="entry name" value="C-1-TETRAHYDROFOLATE SYNTHASE, CYTOPLASMIC-RELATED"/>
    <property type="match status" value="1"/>
</dbReference>
<dbReference type="Pfam" id="PF00763">
    <property type="entry name" value="THF_DHG_CYH"/>
    <property type="match status" value="1"/>
</dbReference>
<dbReference type="Pfam" id="PF02882">
    <property type="entry name" value="THF_DHG_CYH_C"/>
    <property type="match status" value="1"/>
</dbReference>
<dbReference type="PRINTS" id="PR00085">
    <property type="entry name" value="THFDHDRGNASE"/>
</dbReference>
<dbReference type="SUPFAM" id="SSF53223">
    <property type="entry name" value="Aminoacid dehydrogenase-like, N-terminal domain"/>
    <property type="match status" value="1"/>
</dbReference>
<dbReference type="SUPFAM" id="SSF51735">
    <property type="entry name" value="NAD(P)-binding Rossmann-fold domains"/>
    <property type="match status" value="1"/>
</dbReference>
<dbReference type="PROSITE" id="PS00766">
    <property type="entry name" value="THF_DHG_CYH_1"/>
    <property type="match status" value="1"/>
</dbReference>
<dbReference type="PROSITE" id="PS00767">
    <property type="entry name" value="THF_DHG_CYH_2"/>
    <property type="match status" value="1"/>
</dbReference>
<feature type="chain" id="PRO_0000268574" description="Bifunctional protein FolD">
    <location>
        <begin position="1"/>
        <end position="288"/>
    </location>
</feature>
<feature type="binding site" evidence="1">
    <location>
        <begin position="166"/>
        <end position="168"/>
    </location>
    <ligand>
        <name>NADP(+)</name>
        <dbReference type="ChEBI" id="CHEBI:58349"/>
    </ligand>
</feature>
<feature type="binding site" evidence="1">
    <location>
        <position position="232"/>
    </location>
    <ligand>
        <name>NADP(+)</name>
        <dbReference type="ChEBI" id="CHEBI:58349"/>
    </ligand>
</feature>
<sequence>MSAKIIDGKTIAQQVRNEVAAVVQQRLAAGKRAPGLAVVLVGENPASQIYVASKRKACEEVGFVSRSYDLPMATSEAELLALIDSLNEDTEIDGILIQLPLPNGIDNVKVLERIHPDKDVDGFHPYNVGRLCQRAPKLRACTPRGIMTLLERYDIPTYGLNAVVVGASNIVGRPMSLELLLAGCTTTVTHRFTKNLRHHIENADLLVVAVGKPGFIPGEWIKPGAIVIDVGINRLESGKVVGDVAFDVAAERAGWITPVPGGVGPMTVATLIQNTLQACEEYHDISQN</sequence>
<protein>
    <recommendedName>
        <fullName evidence="1">Bifunctional protein FolD</fullName>
    </recommendedName>
    <domain>
        <recommendedName>
            <fullName evidence="1">Methylenetetrahydrofolate dehydrogenase</fullName>
            <ecNumber evidence="1">1.5.1.5</ecNumber>
        </recommendedName>
    </domain>
    <domain>
        <recommendedName>
            <fullName evidence="1">Methenyltetrahydrofolate cyclohydrolase</fullName>
            <ecNumber evidence="1">3.5.4.9</ecNumber>
        </recommendedName>
    </domain>
</protein>
<comment type="function">
    <text evidence="1">Catalyzes the oxidation of 5,10-methylenetetrahydrofolate to 5,10-methenyltetrahydrofolate and then the hydrolysis of 5,10-methenyltetrahydrofolate to 10-formyltetrahydrofolate.</text>
</comment>
<comment type="catalytic activity">
    <reaction evidence="1">
        <text>(6R)-5,10-methylene-5,6,7,8-tetrahydrofolate + NADP(+) = (6R)-5,10-methenyltetrahydrofolate + NADPH</text>
        <dbReference type="Rhea" id="RHEA:22812"/>
        <dbReference type="ChEBI" id="CHEBI:15636"/>
        <dbReference type="ChEBI" id="CHEBI:57455"/>
        <dbReference type="ChEBI" id="CHEBI:57783"/>
        <dbReference type="ChEBI" id="CHEBI:58349"/>
        <dbReference type="EC" id="1.5.1.5"/>
    </reaction>
</comment>
<comment type="catalytic activity">
    <reaction evidence="1">
        <text>(6R)-5,10-methenyltetrahydrofolate + H2O = (6R)-10-formyltetrahydrofolate + H(+)</text>
        <dbReference type="Rhea" id="RHEA:23700"/>
        <dbReference type="ChEBI" id="CHEBI:15377"/>
        <dbReference type="ChEBI" id="CHEBI:15378"/>
        <dbReference type="ChEBI" id="CHEBI:57455"/>
        <dbReference type="ChEBI" id="CHEBI:195366"/>
        <dbReference type="EC" id="3.5.4.9"/>
    </reaction>
</comment>
<comment type="pathway">
    <text evidence="1">One-carbon metabolism; tetrahydrofolate interconversion.</text>
</comment>
<comment type="subunit">
    <text evidence="1">Homodimer.</text>
</comment>
<comment type="similarity">
    <text evidence="1">Belongs to the tetrahydrofolate dehydrogenase/cyclohydrolase family.</text>
</comment>